<dbReference type="EMBL" id="CP001364">
    <property type="protein sequence ID" value="ACM51448.1"/>
    <property type="molecule type" value="Genomic_DNA"/>
</dbReference>
<dbReference type="SMR" id="B9LFG0"/>
<dbReference type="KEGG" id="chl:Chy400_0001"/>
<dbReference type="HOGENOM" id="CLU_026910_3_1_0"/>
<dbReference type="OrthoDB" id="9807019at2"/>
<dbReference type="GO" id="GO:0005737">
    <property type="term" value="C:cytoplasm"/>
    <property type="evidence" value="ECO:0007669"/>
    <property type="project" value="UniProtKB-SubCell"/>
</dbReference>
<dbReference type="GO" id="GO:0005886">
    <property type="term" value="C:plasma membrane"/>
    <property type="evidence" value="ECO:0007669"/>
    <property type="project" value="TreeGrafter"/>
</dbReference>
<dbReference type="GO" id="GO:0005524">
    <property type="term" value="F:ATP binding"/>
    <property type="evidence" value="ECO:0007669"/>
    <property type="project" value="UniProtKB-UniRule"/>
</dbReference>
<dbReference type="GO" id="GO:0016887">
    <property type="term" value="F:ATP hydrolysis activity"/>
    <property type="evidence" value="ECO:0007669"/>
    <property type="project" value="InterPro"/>
</dbReference>
<dbReference type="GO" id="GO:0003688">
    <property type="term" value="F:DNA replication origin binding"/>
    <property type="evidence" value="ECO:0007669"/>
    <property type="project" value="UniProtKB-UniRule"/>
</dbReference>
<dbReference type="GO" id="GO:0008289">
    <property type="term" value="F:lipid binding"/>
    <property type="evidence" value="ECO:0007669"/>
    <property type="project" value="UniProtKB-KW"/>
</dbReference>
<dbReference type="GO" id="GO:0006270">
    <property type="term" value="P:DNA replication initiation"/>
    <property type="evidence" value="ECO:0007669"/>
    <property type="project" value="UniProtKB-UniRule"/>
</dbReference>
<dbReference type="GO" id="GO:0006275">
    <property type="term" value="P:regulation of DNA replication"/>
    <property type="evidence" value="ECO:0007669"/>
    <property type="project" value="UniProtKB-UniRule"/>
</dbReference>
<dbReference type="CDD" id="cd00009">
    <property type="entry name" value="AAA"/>
    <property type="match status" value="1"/>
</dbReference>
<dbReference type="CDD" id="cd06571">
    <property type="entry name" value="Bac_DnaA_C"/>
    <property type="match status" value="1"/>
</dbReference>
<dbReference type="FunFam" id="1.10.8.60:FF:000003">
    <property type="entry name" value="Chromosomal replication initiator protein DnaA"/>
    <property type="match status" value="1"/>
</dbReference>
<dbReference type="FunFam" id="3.40.50.300:FF:000150">
    <property type="entry name" value="Chromosomal replication initiator protein DnaA"/>
    <property type="match status" value="1"/>
</dbReference>
<dbReference type="Gene3D" id="1.10.1750.10">
    <property type="match status" value="1"/>
</dbReference>
<dbReference type="Gene3D" id="1.10.8.60">
    <property type="match status" value="1"/>
</dbReference>
<dbReference type="Gene3D" id="3.30.300.180">
    <property type="match status" value="1"/>
</dbReference>
<dbReference type="Gene3D" id="3.40.50.300">
    <property type="entry name" value="P-loop containing nucleotide triphosphate hydrolases"/>
    <property type="match status" value="1"/>
</dbReference>
<dbReference type="HAMAP" id="MF_00377">
    <property type="entry name" value="DnaA_bact"/>
    <property type="match status" value="1"/>
</dbReference>
<dbReference type="InterPro" id="IPR003593">
    <property type="entry name" value="AAA+_ATPase"/>
</dbReference>
<dbReference type="InterPro" id="IPR001957">
    <property type="entry name" value="Chromosome_initiator_DnaA"/>
</dbReference>
<dbReference type="InterPro" id="IPR020591">
    <property type="entry name" value="Chromosome_initiator_DnaA-like"/>
</dbReference>
<dbReference type="InterPro" id="IPR018312">
    <property type="entry name" value="Chromosome_initiator_DnaA_CS"/>
</dbReference>
<dbReference type="InterPro" id="IPR013159">
    <property type="entry name" value="DnaA_C"/>
</dbReference>
<dbReference type="InterPro" id="IPR013317">
    <property type="entry name" value="DnaA_dom"/>
</dbReference>
<dbReference type="InterPro" id="IPR038454">
    <property type="entry name" value="DnaA_N_sf"/>
</dbReference>
<dbReference type="InterPro" id="IPR027417">
    <property type="entry name" value="P-loop_NTPase"/>
</dbReference>
<dbReference type="InterPro" id="IPR010921">
    <property type="entry name" value="Trp_repressor/repl_initiator"/>
</dbReference>
<dbReference type="NCBIfam" id="TIGR00362">
    <property type="entry name" value="DnaA"/>
    <property type="match status" value="1"/>
</dbReference>
<dbReference type="PANTHER" id="PTHR30050">
    <property type="entry name" value="CHROMOSOMAL REPLICATION INITIATOR PROTEIN DNAA"/>
    <property type="match status" value="1"/>
</dbReference>
<dbReference type="PANTHER" id="PTHR30050:SF2">
    <property type="entry name" value="CHROMOSOMAL REPLICATION INITIATOR PROTEIN DNAA"/>
    <property type="match status" value="1"/>
</dbReference>
<dbReference type="Pfam" id="PF00308">
    <property type="entry name" value="Bac_DnaA"/>
    <property type="match status" value="1"/>
</dbReference>
<dbReference type="Pfam" id="PF08299">
    <property type="entry name" value="Bac_DnaA_C"/>
    <property type="match status" value="1"/>
</dbReference>
<dbReference type="PRINTS" id="PR00051">
    <property type="entry name" value="DNAA"/>
</dbReference>
<dbReference type="SMART" id="SM00382">
    <property type="entry name" value="AAA"/>
    <property type="match status" value="1"/>
</dbReference>
<dbReference type="SMART" id="SM00760">
    <property type="entry name" value="Bac_DnaA_C"/>
    <property type="match status" value="1"/>
</dbReference>
<dbReference type="SUPFAM" id="SSF52540">
    <property type="entry name" value="P-loop containing nucleoside triphosphate hydrolases"/>
    <property type="match status" value="1"/>
</dbReference>
<dbReference type="SUPFAM" id="SSF48295">
    <property type="entry name" value="TrpR-like"/>
    <property type="match status" value="1"/>
</dbReference>
<dbReference type="PROSITE" id="PS01008">
    <property type="entry name" value="DNAA"/>
    <property type="match status" value="1"/>
</dbReference>
<feature type="chain" id="PRO_1000189788" description="Chromosomal replication initiator protein DnaA">
    <location>
        <begin position="1"/>
        <end position="479"/>
    </location>
</feature>
<feature type="region of interest" description="Domain I, interacts with DnaA modulators" evidence="1">
    <location>
        <begin position="1"/>
        <end position="71"/>
    </location>
</feature>
<feature type="region of interest" description="Domain II" evidence="1">
    <location>
        <begin position="71"/>
        <end position="138"/>
    </location>
</feature>
<feature type="region of interest" description="Disordered" evidence="2">
    <location>
        <begin position="86"/>
        <end position="106"/>
    </location>
</feature>
<feature type="region of interest" description="Domain III, AAA+ region" evidence="1">
    <location>
        <begin position="139"/>
        <end position="355"/>
    </location>
</feature>
<feature type="region of interest" description="Domain IV, binds dsDNA" evidence="1">
    <location>
        <begin position="356"/>
        <end position="479"/>
    </location>
</feature>
<feature type="compositionally biased region" description="Polar residues" evidence="2">
    <location>
        <begin position="86"/>
        <end position="99"/>
    </location>
</feature>
<feature type="binding site" evidence="1">
    <location>
        <position position="183"/>
    </location>
    <ligand>
        <name>ATP</name>
        <dbReference type="ChEBI" id="CHEBI:30616"/>
    </ligand>
</feature>
<feature type="binding site" evidence="1">
    <location>
        <position position="185"/>
    </location>
    <ligand>
        <name>ATP</name>
        <dbReference type="ChEBI" id="CHEBI:30616"/>
    </ligand>
</feature>
<feature type="binding site" evidence="1">
    <location>
        <position position="186"/>
    </location>
    <ligand>
        <name>ATP</name>
        <dbReference type="ChEBI" id="CHEBI:30616"/>
    </ligand>
</feature>
<feature type="binding site" evidence="1">
    <location>
        <position position="187"/>
    </location>
    <ligand>
        <name>ATP</name>
        <dbReference type="ChEBI" id="CHEBI:30616"/>
    </ligand>
</feature>
<evidence type="ECO:0000255" key="1">
    <source>
        <dbReference type="HAMAP-Rule" id="MF_00377"/>
    </source>
</evidence>
<evidence type="ECO:0000256" key="2">
    <source>
        <dbReference type="SAM" id="MobiDB-lite"/>
    </source>
</evidence>
<protein>
    <recommendedName>
        <fullName evidence="1">Chromosomal replication initiator protein DnaA</fullName>
    </recommendedName>
</protein>
<reference key="1">
    <citation type="submission" date="2009-01" db="EMBL/GenBank/DDBJ databases">
        <title>Complete sequence of Chloroflexus sp. Y-400-fl.</title>
        <authorList>
            <consortium name="US DOE Joint Genome Institute"/>
            <person name="Lucas S."/>
            <person name="Copeland A."/>
            <person name="Lapidus A."/>
            <person name="Glavina del Rio T."/>
            <person name="Dalin E."/>
            <person name="Tice H."/>
            <person name="Bruce D."/>
            <person name="Goodwin L."/>
            <person name="Pitluck S."/>
            <person name="Sims D."/>
            <person name="Kiss H."/>
            <person name="Brettin T."/>
            <person name="Detter J.C."/>
            <person name="Han C."/>
            <person name="Larimer F."/>
            <person name="Land M."/>
            <person name="Hauser L."/>
            <person name="Kyrpides N."/>
            <person name="Ovchinnikova G."/>
            <person name="Bryant D.A."/>
            <person name="Richardson P."/>
        </authorList>
    </citation>
    <scope>NUCLEOTIDE SEQUENCE [LARGE SCALE GENOMIC DNA]</scope>
    <source>
        <strain>ATCC 29364 / DSM 637 / Y-400-fl</strain>
    </source>
</reference>
<name>DNAA_CHLSY</name>
<organism>
    <name type="scientific">Chloroflexus aurantiacus (strain ATCC 29364 / DSM 637 / Y-400-fl)</name>
    <dbReference type="NCBI Taxonomy" id="480224"/>
    <lineage>
        <taxon>Bacteria</taxon>
        <taxon>Bacillati</taxon>
        <taxon>Chloroflexota</taxon>
        <taxon>Chloroflexia</taxon>
        <taxon>Chloroflexales</taxon>
        <taxon>Chloroflexineae</taxon>
        <taxon>Chloroflexaceae</taxon>
        <taxon>Chloroflexus</taxon>
    </lineage>
</organism>
<gene>
    <name evidence="1" type="primary">dnaA</name>
    <name type="ordered locus">Chy400_0001</name>
</gene>
<keyword id="KW-0067">ATP-binding</keyword>
<keyword id="KW-0963">Cytoplasm</keyword>
<keyword id="KW-0235">DNA replication</keyword>
<keyword id="KW-0238">DNA-binding</keyword>
<keyword id="KW-0446">Lipid-binding</keyword>
<keyword id="KW-0547">Nucleotide-binding</keyword>
<comment type="function">
    <text evidence="1">Plays an essential role in the initiation and regulation of chromosomal replication. ATP-DnaA binds to the origin of replication (oriC) to initiate formation of the DNA replication initiation complex once per cell cycle. Binds the DnaA box (a 9 base pair repeat at the origin) and separates the double-stranded (ds)DNA. Forms a right-handed helical filament on oriC DNA; dsDNA binds to the exterior of the filament while single-stranded (ss)DNA is stabiized in the filament's interior. The ATP-DnaA-oriC complex binds and stabilizes one strand of the AT-rich DNA unwinding element (DUE), permitting loading of DNA polymerase. After initiation quickly degrades to an ADP-DnaA complex that is not apt for DNA replication. Binds acidic phospholipids.</text>
</comment>
<comment type="subunit">
    <text evidence="1">Oligomerizes as a right-handed, spiral filament on DNA at oriC.</text>
</comment>
<comment type="subcellular location">
    <subcellularLocation>
        <location evidence="1">Cytoplasm</location>
    </subcellularLocation>
</comment>
<comment type="domain">
    <text evidence="1">Domain I is involved in oligomerization and binding regulators, domain II is flexibile and of varying length in different bacteria, domain III forms the AAA+ region, while domain IV binds dsDNA.</text>
</comment>
<comment type="similarity">
    <text evidence="1">Belongs to the DnaA family.</text>
</comment>
<accession>B9LFG0</accession>
<proteinExistence type="inferred from homology"/>
<sequence length="479" mass="53290">MNLTQIWKATLSALQTQTSRHDYEALLRPATLLSLDNGAAFIGVSSPGQKEGLENRLLMPLRNALARVVGYPVQVQVLIANLNSRTEPSPSLTLSNGSRLMSDPEPVVAETPAPALTPGNGTGERVVQLDLASAMRSGMLNPRYTFSSFIVGSSNRLAHAACLAVADNPGQAYNPLFLYGGVGLGKTHLLHAIGNRVLDRDPEINVLYVSSEKFTNDLINAIRRQQTEEFRMRYRNIDVLLIDDIQFIAGKDATQEEFFHTFNTLHSAAKHIVISSDRPPKAILTLEERLRSRFEWGLIVDVQPPDLETRTAILRAKAEQMSVHVPDEVIDFLAHKIQSNIRELEGSLNRVAAYAELNRAPITIETATAALADLLGNQRRRRISAEAILQIVSEHYGIEVEQLRARNRSRHVVVPRQVAMYLLREETESSLVDIGNLLGGRDHTTVMYGCEKIAEEINSDSRLRSEVMAIRERIQMLRG</sequence>